<proteinExistence type="inferred from homology"/>
<organism>
    <name type="scientific">Aotus nancymaae</name>
    <name type="common">Ma's night monkey</name>
    <dbReference type="NCBI Taxonomy" id="37293"/>
    <lineage>
        <taxon>Eukaryota</taxon>
        <taxon>Metazoa</taxon>
        <taxon>Chordata</taxon>
        <taxon>Craniata</taxon>
        <taxon>Vertebrata</taxon>
        <taxon>Euteleostomi</taxon>
        <taxon>Mammalia</taxon>
        <taxon>Eutheria</taxon>
        <taxon>Euarchontoglires</taxon>
        <taxon>Primates</taxon>
        <taxon>Haplorrhini</taxon>
        <taxon>Platyrrhini</taxon>
        <taxon>Aotidae</taxon>
        <taxon>Aotus</taxon>
    </lineage>
</organism>
<feature type="signal peptide" evidence="2">
    <location>
        <begin position="1"/>
        <end position="27"/>
    </location>
</feature>
<feature type="chain" id="PRO_0000420988" description="Apolipoprotein C-IV">
    <location>
        <begin position="28"/>
        <end position="126"/>
    </location>
</feature>
<sequence length="126" mass="14526">MSLLRHRLQALPSLCLCVLVLACIGACQSEAYEGTTSPPPEQKMSRWNLVQSRLKELLEPAVTRTRDRWQWLGWSLSTLQGFMQTYYDDHLRDLGPRTKTWLLESKDGLLNKTYSLCPRLLCADKN</sequence>
<evidence type="ECO:0000250" key="1"/>
<evidence type="ECO:0000250" key="2">
    <source>
        <dbReference type="UniProtKB" id="P55057"/>
    </source>
</evidence>
<evidence type="ECO:0000305" key="3"/>
<keyword id="KW-0445">Lipid transport</keyword>
<keyword id="KW-1185">Reference proteome</keyword>
<keyword id="KW-0964">Secreted</keyword>
<keyword id="KW-0732">Signal</keyword>
<keyword id="KW-0813">Transport</keyword>
<reference key="1">
    <citation type="submission" date="2006-07" db="EMBL/GenBank/DDBJ databases">
        <authorList>
            <person name="Cheng J.-F."/>
            <person name="Hamilton M."/>
            <person name="Peng Y."/>
            <person name="Hosseini R."/>
            <person name="Peng Z."/>
            <person name="Malinov I."/>
            <person name="Rubin E.M."/>
        </authorList>
    </citation>
    <scope>NUCLEOTIDE SEQUENCE [LARGE SCALE GENOMIC DNA]</scope>
</reference>
<reference key="2">
    <citation type="unpublished observations" date="2012-11">
        <authorList>
            <person name="Puppione D.L."/>
        </authorList>
    </citation>
    <scope>IDENTIFICATION</scope>
</reference>
<gene>
    <name type="primary">APOC4</name>
</gene>
<accession>P0DKW1</accession>
<comment type="function">
    <text evidence="1">May participate in lipoprotein metabolism.</text>
</comment>
<comment type="subcellular location">
    <subcellularLocation>
        <location evidence="1">Secreted</location>
    </subcellularLocation>
</comment>
<comment type="similarity">
    <text evidence="3">Belongs to the apolipoprotein C4 family.</text>
</comment>
<name>APOC4_AOTNA</name>
<protein>
    <recommendedName>
        <fullName>Apolipoprotein C-IV</fullName>
        <shortName>Apo-CIV</shortName>
        <shortName>ApoC-IV</shortName>
    </recommendedName>
    <alternativeName>
        <fullName>Apolipoprotein C4</fullName>
    </alternativeName>
</protein>
<dbReference type="EMBL" id="AC146520">
    <property type="status" value="NOT_ANNOTATED_CDS"/>
    <property type="molecule type" value="Genomic_DNA"/>
</dbReference>
<dbReference type="RefSeq" id="XP_012302182.1">
    <property type="nucleotide sequence ID" value="XM_012446759.1"/>
</dbReference>
<dbReference type="SMR" id="P0DKW1"/>
<dbReference type="STRING" id="37293.ENSANAP00000019337"/>
<dbReference type="GeneID" id="105713152"/>
<dbReference type="KEGG" id="anan:105713152"/>
<dbReference type="CTD" id="346"/>
<dbReference type="OMA" id="KWQWFWG"/>
<dbReference type="OrthoDB" id="9449255at2759"/>
<dbReference type="Proteomes" id="UP000233020">
    <property type="component" value="Whole Genome Shotgun Assembly"/>
</dbReference>
<dbReference type="GO" id="GO:0034364">
    <property type="term" value="C:high-density lipoprotein particle"/>
    <property type="evidence" value="ECO:0007669"/>
    <property type="project" value="TreeGrafter"/>
</dbReference>
<dbReference type="GO" id="GO:0034361">
    <property type="term" value="C:very-low-density lipoprotein particle"/>
    <property type="evidence" value="ECO:0007669"/>
    <property type="project" value="TreeGrafter"/>
</dbReference>
<dbReference type="GO" id="GO:0006869">
    <property type="term" value="P:lipid transport"/>
    <property type="evidence" value="ECO:0007669"/>
    <property type="project" value="UniProtKB-KW"/>
</dbReference>
<dbReference type="GO" id="GO:0010890">
    <property type="term" value="P:positive regulation of triglyceride storage"/>
    <property type="evidence" value="ECO:0007669"/>
    <property type="project" value="TreeGrafter"/>
</dbReference>
<dbReference type="GO" id="GO:0070328">
    <property type="term" value="P:triglyceride homeostasis"/>
    <property type="evidence" value="ECO:0007669"/>
    <property type="project" value="TreeGrafter"/>
</dbReference>
<dbReference type="InterPro" id="IPR028120">
    <property type="entry name" value="APOC4"/>
</dbReference>
<dbReference type="PANTHER" id="PTHR32288">
    <property type="entry name" value="APOLIPOPROTEIN C-IV"/>
    <property type="match status" value="1"/>
</dbReference>
<dbReference type="PANTHER" id="PTHR32288:SF0">
    <property type="entry name" value="APOLIPOPROTEIN C-IV"/>
    <property type="match status" value="1"/>
</dbReference>
<dbReference type="Pfam" id="PF15119">
    <property type="entry name" value="APOC4"/>
    <property type="match status" value="1"/>
</dbReference>